<name>SRX1B_SARPE</name>
<proteinExistence type="evidence at protein level"/>
<evidence type="ECO:0000269" key="1">
    <source>
    </source>
</evidence>
<evidence type="ECO:0000305" key="2"/>
<sequence>MNFNKVFIFVALILAVFAGQSQAGWLKKIGKKIERVGQHTRDATIQVIGVAQQAANVAATARG</sequence>
<accession>P08376</accession>
<reference key="1">
    <citation type="journal article" date="1989" name="FEBS Lett.">
        <title>Cloning of gene cluster for sarcotoxin I, antibacterial proteins of Sarcophaga peregrina.</title>
        <authorList>
            <person name="Kanai A."/>
            <person name="Natori S."/>
        </authorList>
    </citation>
    <scope>NUCLEOTIDE SEQUENCE [GENOMIC DNA]</scope>
</reference>
<reference key="2">
    <citation type="journal article" date="1985" name="J. Biol. Chem.">
        <title>Primary structure of sarcotoxin I, an antibacterial protein induced in the hemolymph of Sarcophaga peregrina (flesh fly) larvae.</title>
        <authorList>
            <person name="Okada M."/>
            <person name="Natori S."/>
        </authorList>
    </citation>
    <scope>PROTEIN SEQUENCE OF 24-62</scope>
    <scope>AMIDATION AT ARG-62</scope>
</reference>
<protein>
    <recommendedName>
        <fullName>Sarcotoxin-1B</fullName>
    </recommendedName>
    <alternativeName>
        <fullName>Sarcotoxin IB</fullName>
    </alternativeName>
</protein>
<feature type="signal peptide" evidence="1">
    <location>
        <begin position="1"/>
        <end position="23"/>
    </location>
</feature>
<feature type="chain" id="PRO_0000004876" description="Sarcotoxin-1B">
    <location>
        <begin position="24"/>
        <end position="62"/>
    </location>
</feature>
<feature type="modified residue" description="Arginine amide" evidence="1">
    <location>
        <position position="62"/>
    </location>
</feature>
<keyword id="KW-0027">Amidation</keyword>
<keyword id="KW-0044">Antibiotic</keyword>
<keyword id="KW-0929">Antimicrobial</keyword>
<keyword id="KW-0903">Direct protein sequencing</keyword>
<keyword id="KW-0391">Immunity</keyword>
<keyword id="KW-0399">Innate immunity</keyword>
<keyword id="KW-0964">Secreted</keyword>
<keyword id="KW-0732">Signal</keyword>
<comment type="function">
    <text>Sarcotoxins, which are potent bactericidal proteins, are produced in response to injury. They are cytotoxic to both Gram-positive and Gram-negative bacteria.</text>
</comment>
<comment type="subcellular location">
    <subcellularLocation>
        <location>Secreted</location>
    </subcellularLocation>
</comment>
<comment type="similarity">
    <text evidence="2">Belongs to the cecropin family.</text>
</comment>
<dbReference type="EMBL" id="X17315">
    <property type="protein sequence ID" value="CAB57824.1"/>
    <property type="molecule type" value="Genomic_DNA"/>
</dbReference>
<dbReference type="PIR" id="S07048">
    <property type="entry name" value="CKFHBS"/>
</dbReference>
<dbReference type="SMR" id="P08376"/>
<dbReference type="GO" id="GO:0005615">
    <property type="term" value="C:extracellular space"/>
    <property type="evidence" value="ECO:0007669"/>
    <property type="project" value="TreeGrafter"/>
</dbReference>
<dbReference type="GO" id="GO:0019731">
    <property type="term" value="P:antibacterial humoral response"/>
    <property type="evidence" value="ECO:0007669"/>
    <property type="project" value="InterPro"/>
</dbReference>
<dbReference type="GO" id="GO:0050829">
    <property type="term" value="P:defense response to Gram-negative bacterium"/>
    <property type="evidence" value="ECO:0007669"/>
    <property type="project" value="UniProtKB-ARBA"/>
</dbReference>
<dbReference type="GO" id="GO:0050830">
    <property type="term" value="P:defense response to Gram-positive bacterium"/>
    <property type="evidence" value="ECO:0007669"/>
    <property type="project" value="TreeGrafter"/>
</dbReference>
<dbReference type="GO" id="GO:0045087">
    <property type="term" value="P:innate immune response"/>
    <property type="evidence" value="ECO:0007669"/>
    <property type="project" value="UniProtKB-KW"/>
</dbReference>
<dbReference type="InterPro" id="IPR000875">
    <property type="entry name" value="Cecropin"/>
</dbReference>
<dbReference type="InterPro" id="IPR020400">
    <property type="entry name" value="Cecropin_insect"/>
</dbReference>
<dbReference type="PANTHER" id="PTHR38329">
    <property type="entry name" value="CECROPIN-A1-RELATED"/>
    <property type="match status" value="1"/>
</dbReference>
<dbReference type="PANTHER" id="PTHR38329:SF1">
    <property type="entry name" value="CECROPIN-A1-RELATED"/>
    <property type="match status" value="1"/>
</dbReference>
<dbReference type="Pfam" id="PF00272">
    <property type="entry name" value="Cecropin"/>
    <property type="match status" value="1"/>
</dbReference>
<dbReference type="PROSITE" id="PS00268">
    <property type="entry name" value="CECROPIN"/>
    <property type="match status" value="1"/>
</dbReference>
<organism>
    <name type="scientific">Sarcophaga peregrina</name>
    <name type="common">Flesh fly</name>
    <name type="synonym">Boettcherisca peregrina</name>
    <dbReference type="NCBI Taxonomy" id="7386"/>
    <lineage>
        <taxon>Eukaryota</taxon>
        <taxon>Metazoa</taxon>
        <taxon>Ecdysozoa</taxon>
        <taxon>Arthropoda</taxon>
        <taxon>Hexapoda</taxon>
        <taxon>Insecta</taxon>
        <taxon>Pterygota</taxon>
        <taxon>Neoptera</taxon>
        <taxon>Endopterygota</taxon>
        <taxon>Diptera</taxon>
        <taxon>Brachycera</taxon>
        <taxon>Muscomorpha</taxon>
        <taxon>Oestroidea</taxon>
        <taxon>Sarcophagidae</taxon>
        <taxon>Sarcophaga</taxon>
        <taxon>Boettcherisca</taxon>
    </lineage>
</organism>